<evidence type="ECO:0000250" key="1"/>
<evidence type="ECO:0000255" key="2"/>
<evidence type="ECO:0000255" key="3">
    <source>
        <dbReference type="PROSITE-ProRule" id="PRU00363"/>
    </source>
</evidence>
<evidence type="ECO:0000305" key="4"/>
<proteinExistence type="evidence at transcript level"/>
<dbReference type="EMBL" id="DQ898221">
    <property type="protein sequence ID" value="ABJ09465.1"/>
    <property type="molecule type" value="mRNA"/>
</dbReference>
<dbReference type="RefSeq" id="NP_001091819.1">
    <property type="nucleotide sequence ID" value="NM_001098349.1"/>
</dbReference>
<dbReference type="RefSeq" id="XP_012546644.1">
    <property type="nucleotide sequence ID" value="XM_012691190.4"/>
</dbReference>
<dbReference type="SMR" id="Q008X1"/>
<dbReference type="FunCoup" id="Q008X1">
    <property type="interactions" value="3"/>
</dbReference>
<dbReference type="STRING" id="7091.Q008X1"/>
<dbReference type="PaxDb" id="7091-BGIBMGA014360-TA"/>
<dbReference type="EnsemblMetazoa" id="NM_001098349.1">
    <property type="protein sequence ID" value="NP_001091819.1"/>
    <property type="gene ID" value="LOC778525"/>
</dbReference>
<dbReference type="EnsemblMetazoa" id="XM_012691190.3">
    <property type="protein sequence ID" value="XP_012546644.1"/>
    <property type="gene ID" value="LOC778525"/>
</dbReference>
<dbReference type="GeneID" id="778525"/>
<dbReference type="KEGG" id="bmor:778525"/>
<dbReference type="eggNOG" id="ENOG502S86D">
    <property type="taxonomic scope" value="Eukaryota"/>
</dbReference>
<dbReference type="HOGENOM" id="CLU_091827_2_0_1"/>
<dbReference type="InParanoid" id="Q008X1"/>
<dbReference type="OMA" id="DSAITHT"/>
<dbReference type="OrthoDB" id="382409at7088"/>
<dbReference type="Proteomes" id="UP000005204">
    <property type="component" value="Unassembled WGS sequence"/>
</dbReference>
<dbReference type="GO" id="GO:0005576">
    <property type="term" value="C:extracellular region"/>
    <property type="evidence" value="ECO:0000250"/>
    <property type="project" value="UniProtKB"/>
</dbReference>
<dbReference type="GO" id="GO:0016020">
    <property type="term" value="C:membrane"/>
    <property type="evidence" value="ECO:0007669"/>
    <property type="project" value="TreeGrafter"/>
</dbReference>
<dbReference type="GO" id="GO:0042742">
    <property type="term" value="P:defense response to bacterium"/>
    <property type="evidence" value="ECO:0007669"/>
    <property type="project" value="UniProtKB-KW"/>
</dbReference>
<dbReference type="GO" id="GO:0042832">
    <property type="term" value="P:defense response to protozoan"/>
    <property type="evidence" value="ECO:0000250"/>
    <property type="project" value="UniProtKB"/>
</dbReference>
<dbReference type="GO" id="GO:0045087">
    <property type="term" value="P:innate immune response"/>
    <property type="evidence" value="ECO:0007669"/>
    <property type="project" value="UniProtKB-KW"/>
</dbReference>
<dbReference type="CDD" id="cd08544">
    <property type="entry name" value="Reeler"/>
    <property type="match status" value="1"/>
</dbReference>
<dbReference type="FunFam" id="2.60.40.4060:FF:000003">
    <property type="entry name" value="Ferric chelate reductase 1"/>
    <property type="match status" value="1"/>
</dbReference>
<dbReference type="Gene3D" id="2.60.40.4060">
    <property type="entry name" value="Reeler domain"/>
    <property type="match status" value="1"/>
</dbReference>
<dbReference type="InterPro" id="IPR051237">
    <property type="entry name" value="Ferric-chelate_Red/DefProt"/>
</dbReference>
<dbReference type="InterPro" id="IPR002861">
    <property type="entry name" value="Reeler_dom"/>
</dbReference>
<dbReference type="InterPro" id="IPR042307">
    <property type="entry name" value="Reeler_sf"/>
</dbReference>
<dbReference type="PANTHER" id="PTHR45828:SF9">
    <property type="entry name" value="CELL WALL INTEGRITY AND STRESS RESPONSE COMPONENT 4-LIKE-RELATED"/>
    <property type="match status" value="1"/>
</dbReference>
<dbReference type="PANTHER" id="PTHR45828">
    <property type="entry name" value="CYTOCHROME B561/FERRIC REDUCTASE TRANSMEMBRANE"/>
    <property type="match status" value="1"/>
</dbReference>
<dbReference type="Pfam" id="PF02014">
    <property type="entry name" value="Reeler"/>
    <property type="match status" value="1"/>
</dbReference>
<dbReference type="PROSITE" id="PS51019">
    <property type="entry name" value="REELIN"/>
    <property type="match status" value="1"/>
</dbReference>
<feature type="signal peptide" evidence="2">
    <location>
        <begin position="1"/>
        <end position="23"/>
    </location>
</feature>
<feature type="chain" id="PRO_0000372769" description="Putative defense protein">
    <location>
        <begin position="24"/>
        <end position="171"/>
    </location>
</feature>
<feature type="domain" description="Reelin" evidence="3">
    <location>
        <begin position="24"/>
        <end position="171"/>
    </location>
</feature>
<feature type="glycosylation site" description="N-linked (GlcNAc...) asparagine" evidence="2">
    <location>
        <position position="41"/>
    </location>
</feature>
<feature type="disulfide bond" evidence="2">
    <location>
        <begin position="33"/>
        <end position="110"/>
    </location>
</feature>
<name>DFP_BOMMO</name>
<organism>
    <name type="scientific">Bombyx mori</name>
    <name type="common">Silk moth</name>
    <dbReference type="NCBI Taxonomy" id="7091"/>
    <lineage>
        <taxon>Eukaryota</taxon>
        <taxon>Metazoa</taxon>
        <taxon>Ecdysozoa</taxon>
        <taxon>Arthropoda</taxon>
        <taxon>Hexapoda</taxon>
        <taxon>Insecta</taxon>
        <taxon>Pterygota</taxon>
        <taxon>Neoptera</taxon>
        <taxon>Endopterygota</taxon>
        <taxon>Lepidoptera</taxon>
        <taxon>Glossata</taxon>
        <taxon>Ditrysia</taxon>
        <taxon>Bombycoidea</taxon>
        <taxon>Bombycidae</taxon>
        <taxon>Bombycinae</taxon>
        <taxon>Bombyx</taxon>
    </lineage>
</organism>
<accession>Q008X1</accession>
<reference key="1">
    <citation type="submission" date="2006-08" db="EMBL/GenBank/DDBJ databases">
        <title>Construction and analysis of putative protein database based on the cDNA library.</title>
        <authorList>
            <person name="Zhang Y."/>
            <person name="Xu J."/>
            <person name="Chen J."/>
            <person name="Wang D."/>
            <person name="Nie Z."/>
            <person name="Lu Z."/>
            <person name="Jiang C."/>
            <person name="Liu L.-L."/>
            <person name="Song L."/>
            <person name="He P."/>
            <person name="Chen F."/>
            <person name="Wu X.-F."/>
        </authorList>
    </citation>
    <scope>NUCLEOTIDE SEQUENCE [LARGE SCALE MRNA]</scope>
</reference>
<protein>
    <recommendedName>
        <fullName>Putative defense protein</fullName>
    </recommendedName>
</protein>
<keyword id="KW-0044">Antibiotic</keyword>
<keyword id="KW-0929">Antimicrobial</keyword>
<keyword id="KW-1015">Disulfide bond</keyword>
<keyword id="KW-0325">Glycoprotein</keyword>
<keyword id="KW-0391">Immunity</keyword>
<keyword id="KW-0399">Innate immunity</keyword>
<keyword id="KW-1185">Reference proteome</keyword>
<keyword id="KW-0964">Secreted</keyword>
<keyword id="KW-0732">Signal</keyword>
<comment type="function">
    <text evidence="1">May have antimicrobial activity.</text>
</comment>
<comment type="subcellular location">
    <subcellularLocation>
        <location evidence="1">Secreted</location>
    </subcellularLocation>
</comment>
<comment type="similarity">
    <text evidence="4">Belongs to the insect defense protein family.</text>
</comment>
<sequence>MKVYACLCAAVVMLVMTSRVSEARSTGAPLSACRDMMPQHNATAQTSPPPYTITTDAQSVAPGDSVEVVIAGKLPEDTLRGYLLQARQGDDILGTFSLEDGDVFSQLINCGKPGNAVTHKKHDNKEDKRQVRVRWSPPQGLTGEVVFRATIVKTLKVFWVGVQSAPIKIVS</sequence>